<proteinExistence type="inferred from homology"/>
<evidence type="ECO:0000250" key="1">
    <source>
        <dbReference type="UniProtKB" id="Q99VE8"/>
    </source>
</evidence>
<evidence type="ECO:0000305" key="2"/>
<protein>
    <recommendedName>
        <fullName evidence="1">Acid sugar phosphatase</fullName>
        <ecNumber evidence="1">3.1.3.-</ecNumber>
    </recommendedName>
</protein>
<keyword id="KW-0378">Hydrolase</keyword>
<keyword id="KW-0460">Magnesium</keyword>
<keyword id="KW-0479">Metal-binding</keyword>
<comment type="function">
    <text evidence="1">Catalyzes the dephosphorylation of 2-6 carbon acid sugars in vitro.</text>
</comment>
<comment type="cofactor">
    <cofactor evidence="1">
        <name>Mg(2+)</name>
        <dbReference type="ChEBI" id="CHEBI:18420"/>
    </cofactor>
</comment>
<comment type="similarity">
    <text evidence="2">Belongs to the HAD-like hydrolase superfamily. NagD family.</text>
</comment>
<dbReference type="EC" id="3.1.3.-" evidence="1"/>
<dbReference type="EMBL" id="BX571856">
    <property type="protein sequence ID" value="CAG39897.1"/>
    <property type="molecule type" value="Genomic_DNA"/>
</dbReference>
<dbReference type="RefSeq" id="WP_000816182.1">
    <property type="nucleotide sequence ID" value="NC_002952.2"/>
</dbReference>
<dbReference type="SMR" id="Q6GIF9"/>
<dbReference type="KEGG" id="sar:SAR0891"/>
<dbReference type="HOGENOM" id="CLU_043473_1_1_9"/>
<dbReference type="Proteomes" id="UP000000596">
    <property type="component" value="Chromosome"/>
</dbReference>
<dbReference type="GO" id="GO:0005737">
    <property type="term" value="C:cytoplasm"/>
    <property type="evidence" value="ECO:0007669"/>
    <property type="project" value="TreeGrafter"/>
</dbReference>
<dbReference type="GO" id="GO:0046872">
    <property type="term" value="F:metal ion binding"/>
    <property type="evidence" value="ECO:0007669"/>
    <property type="project" value="UniProtKB-KW"/>
</dbReference>
<dbReference type="GO" id="GO:0016791">
    <property type="term" value="F:phosphatase activity"/>
    <property type="evidence" value="ECO:0007669"/>
    <property type="project" value="TreeGrafter"/>
</dbReference>
<dbReference type="CDD" id="cd07530">
    <property type="entry name" value="HAD_Pase_UmpH-like"/>
    <property type="match status" value="1"/>
</dbReference>
<dbReference type="FunFam" id="3.40.50.1000:FF:000053">
    <property type="entry name" value="TIGR01457 family HAD hydrolase"/>
    <property type="match status" value="1"/>
</dbReference>
<dbReference type="Gene3D" id="3.40.50.1000">
    <property type="entry name" value="HAD superfamily/HAD-like"/>
    <property type="match status" value="2"/>
</dbReference>
<dbReference type="InterPro" id="IPR036412">
    <property type="entry name" value="HAD-like_sf"/>
</dbReference>
<dbReference type="InterPro" id="IPR006357">
    <property type="entry name" value="HAD-SF_hydro_IIA"/>
</dbReference>
<dbReference type="InterPro" id="IPR006354">
    <property type="entry name" value="HAD-SF_hydro_IIA_hyp1"/>
</dbReference>
<dbReference type="InterPro" id="IPR023214">
    <property type="entry name" value="HAD_sf"/>
</dbReference>
<dbReference type="NCBIfam" id="TIGR01460">
    <property type="entry name" value="HAD-SF-IIA"/>
    <property type="match status" value="1"/>
</dbReference>
<dbReference type="NCBIfam" id="TIGR01457">
    <property type="entry name" value="HAD-SF-IIA-hyp2"/>
    <property type="match status" value="1"/>
</dbReference>
<dbReference type="PANTHER" id="PTHR19288">
    <property type="entry name" value="4-NITROPHENYLPHOSPHATASE-RELATED"/>
    <property type="match status" value="1"/>
</dbReference>
<dbReference type="PANTHER" id="PTHR19288:SF46">
    <property type="entry name" value="HALOACID DEHALOGENASE-LIKE HYDROLASE DOMAIN-CONTAINING PROTEIN 2"/>
    <property type="match status" value="1"/>
</dbReference>
<dbReference type="Pfam" id="PF13344">
    <property type="entry name" value="Hydrolase_6"/>
    <property type="match status" value="1"/>
</dbReference>
<dbReference type="Pfam" id="PF13242">
    <property type="entry name" value="Hydrolase_like"/>
    <property type="match status" value="1"/>
</dbReference>
<dbReference type="PIRSF" id="PIRSF000915">
    <property type="entry name" value="PGP-type_phosphatase"/>
    <property type="match status" value="1"/>
</dbReference>
<dbReference type="SFLD" id="SFLDG01139">
    <property type="entry name" value="C2.A:_Pyridoxal_Phosphate_Phos"/>
    <property type="match status" value="1"/>
</dbReference>
<dbReference type="SFLD" id="SFLDS00003">
    <property type="entry name" value="Haloacid_Dehalogenase"/>
    <property type="match status" value="1"/>
</dbReference>
<dbReference type="SUPFAM" id="SSF56784">
    <property type="entry name" value="HAD-like"/>
    <property type="match status" value="1"/>
</dbReference>
<organism>
    <name type="scientific">Staphylococcus aureus (strain MRSA252)</name>
    <dbReference type="NCBI Taxonomy" id="282458"/>
    <lineage>
        <taxon>Bacteria</taxon>
        <taxon>Bacillati</taxon>
        <taxon>Bacillota</taxon>
        <taxon>Bacilli</taxon>
        <taxon>Bacillales</taxon>
        <taxon>Staphylococcaceae</taxon>
        <taxon>Staphylococcus</taxon>
    </lineage>
</organism>
<feature type="chain" id="PRO_0000271483" description="Acid sugar phosphatase">
    <location>
        <begin position="1"/>
        <end position="259"/>
    </location>
</feature>
<gene>
    <name type="primary">nagD</name>
    <name type="ordered locus">SAR0891</name>
</gene>
<name>NAGD_STAAR</name>
<sequence length="259" mass="27980">MKQYKAYLIDLDGTMYMGTDEIDGAKQFIDYLNVKGIPHLYVTNNSTKTPEQVTEKLREMHIDAKPEEVVTSALATADYISEQSPGASVYMLGGSGLNTALTEAGLVIKNDEHVDYVVIGLDEQVTYEKLAIATLGVRNGATFISTNPDVSIPKERGFLPGNGAITSVVSVSTGVSPQFIGKPEPIIMVKALEILGLDKSEVAMVGDLYDTDIMSGINVGMDTIHVQTGVSTLEDVQNKNVPPTYSFKDLNEAIAELEK</sequence>
<reference key="1">
    <citation type="journal article" date="2004" name="Proc. Natl. Acad. Sci. U.S.A.">
        <title>Complete genomes of two clinical Staphylococcus aureus strains: evidence for the rapid evolution of virulence and drug resistance.</title>
        <authorList>
            <person name="Holden M.T.G."/>
            <person name="Feil E.J."/>
            <person name="Lindsay J.A."/>
            <person name="Peacock S.J."/>
            <person name="Day N.P.J."/>
            <person name="Enright M.C."/>
            <person name="Foster T.J."/>
            <person name="Moore C.E."/>
            <person name="Hurst L."/>
            <person name="Atkin R."/>
            <person name="Barron A."/>
            <person name="Bason N."/>
            <person name="Bentley S.D."/>
            <person name="Chillingworth C."/>
            <person name="Chillingworth T."/>
            <person name="Churcher C."/>
            <person name="Clark L."/>
            <person name="Corton C."/>
            <person name="Cronin A."/>
            <person name="Doggett J."/>
            <person name="Dowd L."/>
            <person name="Feltwell T."/>
            <person name="Hance Z."/>
            <person name="Harris B."/>
            <person name="Hauser H."/>
            <person name="Holroyd S."/>
            <person name="Jagels K."/>
            <person name="James K.D."/>
            <person name="Lennard N."/>
            <person name="Line A."/>
            <person name="Mayes R."/>
            <person name="Moule S."/>
            <person name="Mungall K."/>
            <person name="Ormond D."/>
            <person name="Quail M.A."/>
            <person name="Rabbinowitsch E."/>
            <person name="Rutherford K.M."/>
            <person name="Sanders M."/>
            <person name="Sharp S."/>
            <person name="Simmonds M."/>
            <person name="Stevens K."/>
            <person name="Whitehead S."/>
            <person name="Barrell B.G."/>
            <person name="Spratt B.G."/>
            <person name="Parkhill J."/>
        </authorList>
    </citation>
    <scope>NUCLEOTIDE SEQUENCE [LARGE SCALE GENOMIC DNA]</scope>
    <source>
        <strain>MRSA252</strain>
    </source>
</reference>
<accession>Q6GIF9</accession>